<keyword id="KW-1185">Reference proteome</keyword>
<keyword id="KW-0687">Ribonucleoprotein</keyword>
<keyword id="KW-0689">Ribosomal protein</keyword>
<keyword id="KW-0694">RNA-binding</keyword>
<keyword id="KW-0699">rRNA-binding</keyword>
<feature type="chain" id="PRO_0000111268" description="Small ribosomal subunit protein bS18">
    <location>
        <begin position="1"/>
        <end position="76"/>
    </location>
</feature>
<gene>
    <name evidence="1" type="primary">rpsR</name>
    <name type="ordered locus">PD_1944</name>
</gene>
<protein>
    <recommendedName>
        <fullName evidence="1">Small ribosomal subunit protein bS18</fullName>
    </recommendedName>
    <alternativeName>
        <fullName evidence="2">30S ribosomal protein S18</fullName>
    </alternativeName>
</protein>
<comment type="function">
    <text evidence="1">Binds as a heterodimer with protein bS6 to the central domain of the 16S rRNA, where it helps stabilize the platform of the 30S subunit.</text>
</comment>
<comment type="subunit">
    <text evidence="1">Part of the 30S ribosomal subunit. Forms a tight heterodimer with protein bS6.</text>
</comment>
<comment type="similarity">
    <text evidence="1">Belongs to the bacterial ribosomal protein bS18 family.</text>
</comment>
<sequence>MSKFFRRRKFCKFTAEGIKEIDYKDLNTLRQYLTENGRIVPSRVTGTKSKYQRQLTTAVKLARFLALIPYTDNHDI</sequence>
<organism>
    <name type="scientific">Xylella fastidiosa (strain Temecula1 / ATCC 700964)</name>
    <dbReference type="NCBI Taxonomy" id="183190"/>
    <lineage>
        <taxon>Bacteria</taxon>
        <taxon>Pseudomonadati</taxon>
        <taxon>Pseudomonadota</taxon>
        <taxon>Gammaproteobacteria</taxon>
        <taxon>Lysobacterales</taxon>
        <taxon>Lysobacteraceae</taxon>
        <taxon>Xylella</taxon>
    </lineage>
</organism>
<reference key="1">
    <citation type="journal article" date="2003" name="J. Bacteriol.">
        <title>Comparative analyses of the complete genome sequences of Pierce's disease and citrus variegated chlorosis strains of Xylella fastidiosa.</title>
        <authorList>
            <person name="Van Sluys M.A."/>
            <person name="de Oliveira M.C."/>
            <person name="Monteiro-Vitorello C.B."/>
            <person name="Miyaki C.Y."/>
            <person name="Furlan L.R."/>
            <person name="Camargo L.E.A."/>
            <person name="da Silva A.C.R."/>
            <person name="Moon D.H."/>
            <person name="Takita M.A."/>
            <person name="Lemos E.G.M."/>
            <person name="Machado M.A."/>
            <person name="Ferro M.I.T."/>
            <person name="da Silva F.R."/>
            <person name="Goldman M.H.S."/>
            <person name="Goldman G.H."/>
            <person name="Lemos M.V.F."/>
            <person name="El-Dorry H."/>
            <person name="Tsai S.M."/>
            <person name="Carrer H."/>
            <person name="Carraro D.M."/>
            <person name="de Oliveira R.C."/>
            <person name="Nunes L.R."/>
            <person name="Siqueira W.J."/>
            <person name="Coutinho L.L."/>
            <person name="Kimura E.T."/>
            <person name="Ferro E.S."/>
            <person name="Harakava R."/>
            <person name="Kuramae E.E."/>
            <person name="Marino C.L."/>
            <person name="Giglioti E."/>
            <person name="Abreu I.L."/>
            <person name="Alves L.M.C."/>
            <person name="do Amaral A.M."/>
            <person name="Baia G.S."/>
            <person name="Blanco S.R."/>
            <person name="Brito M.S."/>
            <person name="Cannavan F.S."/>
            <person name="Celestino A.V."/>
            <person name="da Cunha A.F."/>
            <person name="Fenille R.C."/>
            <person name="Ferro J.A."/>
            <person name="Formighieri E.F."/>
            <person name="Kishi L.T."/>
            <person name="Leoni S.G."/>
            <person name="Oliveira A.R."/>
            <person name="Rosa V.E. Jr."/>
            <person name="Sassaki F.T."/>
            <person name="Sena J.A.D."/>
            <person name="de Souza A.A."/>
            <person name="Truffi D."/>
            <person name="Tsukumo F."/>
            <person name="Yanai G.M."/>
            <person name="Zaros L.G."/>
            <person name="Civerolo E.L."/>
            <person name="Simpson A.J.G."/>
            <person name="Almeida N.F. Jr."/>
            <person name="Setubal J.C."/>
            <person name="Kitajima J.P."/>
        </authorList>
    </citation>
    <scope>NUCLEOTIDE SEQUENCE [LARGE SCALE GENOMIC DNA]</scope>
    <source>
        <strain>Temecula1 / ATCC 700964</strain>
    </source>
</reference>
<name>RS18_XYLFT</name>
<accession>Q87A84</accession>
<proteinExistence type="inferred from homology"/>
<dbReference type="EMBL" id="AE009442">
    <property type="protein sequence ID" value="AAO29774.1"/>
    <property type="molecule type" value="Genomic_DNA"/>
</dbReference>
<dbReference type="RefSeq" id="WP_004084635.1">
    <property type="nucleotide sequence ID" value="NC_004556.1"/>
</dbReference>
<dbReference type="SMR" id="Q87A84"/>
<dbReference type="GeneID" id="93905805"/>
<dbReference type="KEGG" id="xft:PD_1944"/>
<dbReference type="HOGENOM" id="CLU_148710_2_2_6"/>
<dbReference type="Proteomes" id="UP000002516">
    <property type="component" value="Chromosome"/>
</dbReference>
<dbReference type="GO" id="GO:0022627">
    <property type="term" value="C:cytosolic small ribosomal subunit"/>
    <property type="evidence" value="ECO:0007669"/>
    <property type="project" value="TreeGrafter"/>
</dbReference>
<dbReference type="GO" id="GO:0070181">
    <property type="term" value="F:small ribosomal subunit rRNA binding"/>
    <property type="evidence" value="ECO:0007669"/>
    <property type="project" value="TreeGrafter"/>
</dbReference>
<dbReference type="GO" id="GO:0003735">
    <property type="term" value="F:structural constituent of ribosome"/>
    <property type="evidence" value="ECO:0007669"/>
    <property type="project" value="InterPro"/>
</dbReference>
<dbReference type="GO" id="GO:0006412">
    <property type="term" value="P:translation"/>
    <property type="evidence" value="ECO:0007669"/>
    <property type="project" value="UniProtKB-UniRule"/>
</dbReference>
<dbReference type="FunFam" id="4.10.640.10:FF:000001">
    <property type="entry name" value="30S ribosomal protein S18"/>
    <property type="match status" value="1"/>
</dbReference>
<dbReference type="Gene3D" id="4.10.640.10">
    <property type="entry name" value="Ribosomal protein S18"/>
    <property type="match status" value="1"/>
</dbReference>
<dbReference type="HAMAP" id="MF_00270">
    <property type="entry name" value="Ribosomal_bS18"/>
    <property type="match status" value="1"/>
</dbReference>
<dbReference type="InterPro" id="IPR001648">
    <property type="entry name" value="Ribosomal_bS18"/>
</dbReference>
<dbReference type="InterPro" id="IPR018275">
    <property type="entry name" value="Ribosomal_bS18_CS"/>
</dbReference>
<dbReference type="InterPro" id="IPR036870">
    <property type="entry name" value="Ribosomal_bS18_sf"/>
</dbReference>
<dbReference type="NCBIfam" id="TIGR00165">
    <property type="entry name" value="S18"/>
    <property type="match status" value="1"/>
</dbReference>
<dbReference type="PANTHER" id="PTHR13479">
    <property type="entry name" value="30S RIBOSOMAL PROTEIN S18"/>
    <property type="match status" value="1"/>
</dbReference>
<dbReference type="PANTHER" id="PTHR13479:SF40">
    <property type="entry name" value="SMALL RIBOSOMAL SUBUNIT PROTEIN BS18M"/>
    <property type="match status" value="1"/>
</dbReference>
<dbReference type="Pfam" id="PF01084">
    <property type="entry name" value="Ribosomal_S18"/>
    <property type="match status" value="1"/>
</dbReference>
<dbReference type="PRINTS" id="PR00974">
    <property type="entry name" value="RIBOSOMALS18"/>
</dbReference>
<dbReference type="SUPFAM" id="SSF46911">
    <property type="entry name" value="Ribosomal protein S18"/>
    <property type="match status" value="1"/>
</dbReference>
<dbReference type="PROSITE" id="PS00057">
    <property type="entry name" value="RIBOSOMAL_S18"/>
    <property type="match status" value="1"/>
</dbReference>
<evidence type="ECO:0000255" key="1">
    <source>
        <dbReference type="HAMAP-Rule" id="MF_00270"/>
    </source>
</evidence>
<evidence type="ECO:0000305" key="2"/>